<proteinExistence type="evidence at protein level"/>
<reference key="1">
    <citation type="journal article" date="2003" name="Nature">
        <title>The DNA sequence of human chromosome 7.</title>
        <authorList>
            <person name="Hillier L.W."/>
            <person name="Fulton R.S."/>
            <person name="Fulton L.A."/>
            <person name="Graves T.A."/>
            <person name="Pepin K.H."/>
            <person name="Wagner-McPherson C."/>
            <person name="Layman D."/>
            <person name="Maas J."/>
            <person name="Jaeger S."/>
            <person name="Walker R."/>
            <person name="Wylie K."/>
            <person name="Sekhon M."/>
            <person name="Becker M.C."/>
            <person name="O'Laughlin M.D."/>
            <person name="Schaller M.E."/>
            <person name="Fewell G.A."/>
            <person name="Delehaunty K.D."/>
            <person name="Miner T.L."/>
            <person name="Nash W.E."/>
            <person name="Cordes M."/>
            <person name="Du H."/>
            <person name="Sun H."/>
            <person name="Edwards J."/>
            <person name="Bradshaw-Cordum H."/>
            <person name="Ali J."/>
            <person name="Andrews S."/>
            <person name="Isak A."/>
            <person name="Vanbrunt A."/>
            <person name="Nguyen C."/>
            <person name="Du F."/>
            <person name="Lamar B."/>
            <person name="Courtney L."/>
            <person name="Kalicki J."/>
            <person name="Ozersky P."/>
            <person name="Bielicki L."/>
            <person name="Scott K."/>
            <person name="Holmes A."/>
            <person name="Harkins R."/>
            <person name="Harris A."/>
            <person name="Strong C.M."/>
            <person name="Hou S."/>
            <person name="Tomlinson C."/>
            <person name="Dauphin-Kohlberg S."/>
            <person name="Kozlowicz-Reilly A."/>
            <person name="Leonard S."/>
            <person name="Rohlfing T."/>
            <person name="Rock S.M."/>
            <person name="Tin-Wollam A.-M."/>
            <person name="Abbott A."/>
            <person name="Minx P."/>
            <person name="Maupin R."/>
            <person name="Strowmatt C."/>
            <person name="Latreille P."/>
            <person name="Miller N."/>
            <person name="Johnson D."/>
            <person name="Murray J."/>
            <person name="Woessner J.P."/>
            <person name="Wendl M.C."/>
            <person name="Yang S.-P."/>
            <person name="Schultz B.R."/>
            <person name="Wallis J.W."/>
            <person name="Spieth J."/>
            <person name="Bieri T.A."/>
            <person name="Nelson J.O."/>
            <person name="Berkowicz N."/>
            <person name="Wohldmann P.E."/>
            <person name="Cook L.L."/>
            <person name="Hickenbotham M.T."/>
            <person name="Eldred J."/>
            <person name="Williams D."/>
            <person name="Bedell J.A."/>
            <person name="Mardis E.R."/>
            <person name="Clifton S.W."/>
            <person name="Chissoe S.L."/>
            <person name="Marra M.A."/>
            <person name="Raymond C."/>
            <person name="Haugen E."/>
            <person name="Gillett W."/>
            <person name="Zhou Y."/>
            <person name="James R."/>
            <person name="Phelps K."/>
            <person name="Iadanoto S."/>
            <person name="Bubb K."/>
            <person name="Simms E."/>
            <person name="Levy R."/>
            <person name="Clendenning J."/>
            <person name="Kaul R."/>
            <person name="Kent W.J."/>
            <person name="Furey T.S."/>
            <person name="Baertsch R.A."/>
            <person name="Brent M.R."/>
            <person name="Keibler E."/>
            <person name="Flicek P."/>
            <person name="Bork P."/>
            <person name="Suyama M."/>
            <person name="Bailey J.A."/>
            <person name="Portnoy M.E."/>
            <person name="Torrents D."/>
            <person name="Chinwalla A.T."/>
            <person name="Gish W.R."/>
            <person name="Eddy S.R."/>
            <person name="McPherson J.D."/>
            <person name="Olson M.V."/>
            <person name="Eichler E.E."/>
            <person name="Green E.D."/>
            <person name="Waterston R.H."/>
            <person name="Wilson R.K."/>
        </authorList>
    </citation>
    <scope>NUCLEOTIDE SEQUENCE [LARGE SCALE GENOMIC DNA] (IMGT ALLELE TRBJ1-2*01)</scope>
</reference>
<reference key="2">
    <citation type="book" date="2001" name="The T Cell Receptor FactsBook.">
        <title>The T Cell Receptor FactsBook.</title>
        <editorList>
            <person name="Lefranc M.P."/>
            <person name="Lefranc G."/>
        </editorList>
        <authorList>
            <person name="Lefranc M.P."/>
            <person name="Lefranc G."/>
        </authorList>
    </citation>
    <scope>NOMENCLATURE</scope>
</reference>
<reference key="3">
    <citation type="journal article" date="2004" name="Nat. Rev. Immunol.">
        <title>The many important facets of T-cell repertoire diversity.</title>
        <authorList>
            <person name="Nikolich-Zugich J."/>
            <person name="Slifka M.K."/>
            <person name="Messaoudi I."/>
        </authorList>
    </citation>
    <scope>REVIEW ON T CELL REPERTOIRE DIVERSITY</scope>
</reference>
<reference key="4">
    <citation type="journal article" date="2010" name="Cold Spring Harb. Perspect. Biol.">
        <title>Structural biology of the T-cell receptor: insights into receptor assembly, ligand recognition, and initiation of signaling.</title>
        <authorList>
            <person name="Wucherpfennig K.W."/>
            <person name="Gagnon E."/>
            <person name="Call M.J."/>
            <person name="Huseby E.S."/>
            <person name="Call M.E."/>
        </authorList>
    </citation>
    <scope>REVIEW ON T CELL RECEPTOR-CD3 COMPLEX ASSEMBLY</scope>
    <scope>SUBCELLULAR LOCATION</scope>
</reference>
<reference key="5">
    <citation type="journal article" date="2013" name="Nat. Rev. Immunol.">
        <title>T cell receptor signalling networks: branched, diversified and bounded.</title>
        <authorList>
            <person name="Brownlie R.J."/>
            <person name="Zamoyska R."/>
        </authorList>
    </citation>
    <scope>REVIEW ON T CELL RECEPTOR SIGNALING</scope>
</reference>
<reference key="6">
    <citation type="journal article" date="2014" name="Front. Immunol.">
        <title>Immunoglobulin and T Cell Receptor Genes: IMGT((R)) and the Birth and Rise of Immunoinformatics.</title>
        <authorList>
            <person name="Lefranc M.P."/>
        </authorList>
    </citation>
    <scope>NOMENCLATURE</scope>
</reference>
<reference key="7">
    <citation type="journal article" date="2015" name="Annu. Rev. Immunol.">
        <title>T cell antigen receptor recognition of antigen-presenting molecules.</title>
        <authorList>
            <person name="Rossjohn J."/>
            <person name="Gras S."/>
            <person name="Miles J.J."/>
            <person name="Turner S.J."/>
            <person name="Godfrey D.I."/>
            <person name="McCluskey J."/>
        </authorList>
    </citation>
    <scope>REVIEW ON FUNCTION</scope>
</reference>
<evidence type="ECO:0000303" key="1">
    <source>
    </source>
</evidence>
<evidence type="ECO:0000303" key="2">
    <source>
    </source>
</evidence>
<evidence type="ECO:0000303" key="3">
    <source>
    </source>
</evidence>
<evidence type="ECO:0000303" key="4">
    <source>
    </source>
</evidence>
<evidence type="ECO:0000303" key="5">
    <source>
    </source>
</evidence>
<evidence type="ECO:0000303" key="6">
    <source ref="2"/>
</evidence>
<evidence type="ECO:0000312" key="7">
    <source>
        <dbReference type="HGNC" id="HGNC:12163"/>
    </source>
</evidence>
<gene>
    <name evidence="6 7" type="primary">TRBJ1-2</name>
</gene>
<dbReference type="EMBL" id="AC239618">
    <property type="status" value="NOT_ANNOTATED_CDS"/>
    <property type="molecule type" value="Genomic_DNA"/>
</dbReference>
<dbReference type="EMBL" id="AC245427">
    <property type="status" value="NOT_ANNOTATED_CDS"/>
    <property type="molecule type" value="Genomic_DNA"/>
</dbReference>
<dbReference type="PDB" id="7NDQ">
    <property type="method" value="X-ray"/>
    <property type="resolution" value="2.55 A"/>
    <property type="chains" value="EEE=3-15"/>
</dbReference>
<dbReference type="PDB" id="7NDU">
    <property type="method" value="X-ray"/>
    <property type="resolution" value="2.90 A"/>
    <property type="chains" value="EEE=2-15"/>
</dbReference>
<dbReference type="PDBsum" id="7NDQ"/>
<dbReference type="PDBsum" id="7NDU"/>
<dbReference type="SMR" id="A0A0J9YX06"/>
<dbReference type="IMGT_GENE-DB" id="TRBJ1-2"/>
<dbReference type="BioMuta" id="ENSG00000281989"/>
<dbReference type="Ensembl" id="ENST00000631745.1">
    <property type="protein sequence ID" value="ENSP00000488193.1"/>
    <property type="gene ID" value="ENSG00000281989.1"/>
</dbReference>
<dbReference type="Ensembl" id="ENST00000633553.1">
    <property type="protein sequence ID" value="ENSP00000488356.1"/>
    <property type="gene ID" value="ENSG00000282420.1"/>
</dbReference>
<dbReference type="AGR" id="HGNC:12163"/>
<dbReference type="GeneCards" id="TRBJ1-2"/>
<dbReference type="HGNC" id="HGNC:12163">
    <property type="gene designation" value="TRBJ1-2"/>
</dbReference>
<dbReference type="HPA" id="ENSG00000282420">
    <property type="expression patterns" value="Tissue enriched (lymphoid)"/>
</dbReference>
<dbReference type="neXtProt" id="NX_A0A0J9YX06"/>
<dbReference type="VEuPathDB" id="HostDB:ENSG00000282420"/>
<dbReference type="InParanoid" id="A0A0J9YX06"/>
<dbReference type="PAN-GO" id="A0A0J9YX06">
    <property type="GO annotations" value="0 GO annotations based on evolutionary models"/>
</dbReference>
<dbReference type="ChiTaRS" id="TRBJ1-2">
    <property type="organism name" value="human"/>
</dbReference>
<dbReference type="PRO" id="PR:A0A0J9YX06"/>
<dbReference type="Proteomes" id="UP000005640">
    <property type="component" value="Chromosome 7"/>
</dbReference>
<dbReference type="Bgee" id="ENSG00000282420">
    <property type="expression patterns" value="Expressed in granulocyte and 81 other cell types or tissues"/>
</dbReference>
<dbReference type="GO" id="GO:0042101">
    <property type="term" value="C:T cell receptor complex"/>
    <property type="evidence" value="ECO:0007669"/>
    <property type="project" value="UniProtKB-KW"/>
</dbReference>
<dbReference type="GO" id="GO:0002250">
    <property type="term" value="P:adaptive immune response"/>
    <property type="evidence" value="ECO:0007669"/>
    <property type="project" value="UniProtKB-KW"/>
</dbReference>
<keyword id="KW-0002">3D-structure</keyword>
<keyword id="KW-1064">Adaptive immunity</keyword>
<keyword id="KW-1003">Cell membrane</keyword>
<keyword id="KW-0391">Immunity</keyword>
<keyword id="KW-0472">Membrane</keyword>
<keyword id="KW-0675">Receptor</keyword>
<keyword id="KW-1185">Reference proteome</keyword>
<keyword id="KW-1279">T cell receptor</keyword>
<feature type="chain" id="PRO_0000447478" description="T cell receptor beta joining 1-2">
    <location>
        <begin position="1" status="less than"/>
        <end position="15" status="greater than"/>
    </location>
</feature>
<feature type="non-terminal residue">
    <location>
        <position position="1"/>
    </location>
</feature>
<feature type="non-terminal residue">
    <location>
        <position position="15"/>
    </location>
</feature>
<organism>
    <name type="scientific">Homo sapiens</name>
    <name type="common">Human</name>
    <dbReference type="NCBI Taxonomy" id="9606"/>
    <lineage>
        <taxon>Eukaryota</taxon>
        <taxon>Metazoa</taxon>
        <taxon>Chordata</taxon>
        <taxon>Craniata</taxon>
        <taxon>Vertebrata</taxon>
        <taxon>Euteleostomi</taxon>
        <taxon>Mammalia</taxon>
        <taxon>Eutheria</taxon>
        <taxon>Euarchontoglires</taxon>
        <taxon>Primates</taxon>
        <taxon>Haplorrhini</taxon>
        <taxon>Catarrhini</taxon>
        <taxon>Hominidae</taxon>
        <taxon>Homo</taxon>
    </lineage>
</organism>
<accession>A0A0J9YX06</accession>
<comment type="function">
    <text evidence="1 3 4 5">J region of the variable domain of T cell receptor (TR) beta chain that participates in the antigen recognition (PubMed:24600447). Alpha-beta T cell receptors are antigen specific receptors which are essential to the immune response and are present on the cell surface of T lymphocytes. Recognize peptide-major histocompatibility (MH) (pMH) complexes that are displayed by antigen presenting cells (APC), a prerequisite for efficient T cell adaptive immunity against pathogens (PubMed:25493333). Binding of alpha-beta TR to pMH complex initiates TR-CD3 clustering on the cell surface and intracellular activation of LCK that phosphorylates the ITAM motifs of CD3G, CD3D, CD3E and CD247 enabling the recruitment of ZAP70. In turn ZAP70 phosphorylates LAT, which recruits numerous signaling molecules to form the LAT signalosome. The LAT signalosome propagates signal branching to three major signaling pathways, the calcium, the mitogen-activated protein kinase (MAPK) kinase and the nuclear factor NF-kappa-B (NF-kB) pathways, leading to the mobilization of transcription factors that are critical for gene expression and essential for T cell growth and differentiation (PubMed:23524462). The T cell repertoire is generated in the thymus, by V-(D)-J rearrangement. This repertoire is then shaped by intrathymic selection events to generate a peripheral T cell pool of self-MH restricted, non-autoaggressive T cells. Post-thymic interaction of alpha-beta TR with the pMH complexes shapes TR structural and functional avidity (PubMed:15040585).</text>
</comment>
<comment type="subunit">
    <text evidence="2">Alpha-beta TR is a heterodimer composed of an alpha and beta chain; disulfide-linked. The alpha-beta TR is associated with the transmembrane signaling CD3 coreceptor proteins to form the TR-CD3 (TcR or TCR). The assembly of alpha-beta TR heterodimers with CD3 occurs in the endoplasmic reticulum where a single alpha-beta TR heterodimer associates with one CD3D-CD3E heterodimer, one CD3G-CD3E heterodimer and one CD247 homodimer forming a stable octameric structure. CD3D-CD3E and CD3G-CD3E heterodimers preferentially associate with TR alpha and TR beta chains, respectively. The association of the CD247 homodimer is the last step of TcR assembly in the endoplasmic reticulum and is required for transport to the cell surface.</text>
</comment>
<comment type="subcellular location">
    <subcellularLocation>
        <location evidence="2">Cell membrane</location>
    </subcellularLocation>
</comment>
<sequence length="15" mass="1635">NYGYTFGSGTRLTVV</sequence>
<protein>
    <recommendedName>
        <fullName evidence="6">T cell receptor beta joining 1-2</fullName>
    </recommendedName>
</protein>
<name>TJB12_HUMAN</name>